<reference key="1">
    <citation type="submission" date="2003-07" db="EMBL/GenBank/DDBJ databases">
        <title>Characterization of three rice cell wall invertase genes.</title>
        <authorList>
            <person name="Wang Y.-Q."/>
            <person name="Zhu Z."/>
        </authorList>
    </citation>
    <scope>NUCLEOTIDE SEQUENCE [MRNA]</scope>
    <source>
        <strain>cv. Minghui 86</strain>
    </source>
</reference>
<reference key="2">
    <citation type="journal article" date="2002" name="Nature">
        <title>Sequence and analysis of rice chromosome 4.</title>
        <authorList>
            <person name="Feng Q."/>
            <person name="Zhang Y."/>
            <person name="Hao P."/>
            <person name="Wang S."/>
            <person name="Fu G."/>
            <person name="Huang Y."/>
            <person name="Li Y."/>
            <person name="Zhu J."/>
            <person name="Liu Y."/>
            <person name="Hu X."/>
            <person name="Jia P."/>
            <person name="Zhang Y."/>
            <person name="Zhao Q."/>
            <person name="Ying K."/>
            <person name="Yu S."/>
            <person name="Tang Y."/>
            <person name="Weng Q."/>
            <person name="Zhang L."/>
            <person name="Lu Y."/>
            <person name="Mu J."/>
            <person name="Lu Y."/>
            <person name="Zhang L.S."/>
            <person name="Yu Z."/>
            <person name="Fan D."/>
            <person name="Liu X."/>
            <person name="Lu T."/>
            <person name="Li C."/>
            <person name="Wu Y."/>
            <person name="Sun T."/>
            <person name="Lei H."/>
            <person name="Li T."/>
            <person name="Hu H."/>
            <person name="Guan J."/>
            <person name="Wu M."/>
            <person name="Zhang R."/>
            <person name="Zhou B."/>
            <person name="Chen Z."/>
            <person name="Chen L."/>
            <person name="Jin Z."/>
            <person name="Wang R."/>
            <person name="Yin H."/>
            <person name="Cai Z."/>
            <person name="Ren S."/>
            <person name="Lv G."/>
            <person name="Gu W."/>
            <person name="Zhu G."/>
            <person name="Tu Y."/>
            <person name="Jia J."/>
            <person name="Zhang Y."/>
            <person name="Chen J."/>
            <person name="Kang H."/>
            <person name="Chen X."/>
            <person name="Shao C."/>
            <person name="Sun Y."/>
            <person name="Hu Q."/>
            <person name="Zhang X."/>
            <person name="Zhang W."/>
            <person name="Wang L."/>
            <person name="Ding C."/>
            <person name="Sheng H."/>
            <person name="Gu J."/>
            <person name="Chen S."/>
            <person name="Ni L."/>
            <person name="Zhu F."/>
            <person name="Chen W."/>
            <person name="Lan L."/>
            <person name="Lai Y."/>
            <person name="Cheng Z."/>
            <person name="Gu M."/>
            <person name="Jiang J."/>
            <person name="Li J."/>
            <person name="Hong G."/>
            <person name="Xue Y."/>
            <person name="Han B."/>
        </authorList>
    </citation>
    <scope>NUCLEOTIDE SEQUENCE [LARGE SCALE GENOMIC DNA]</scope>
    <source>
        <strain>cv. Guang-Lu-Ai No.4</strain>
    </source>
</reference>
<reference key="3">
    <citation type="journal article" date="2005" name="PLoS Biol.">
        <title>The genomes of Oryza sativa: a history of duplications.</title>
        <authorList>
            <person name="Yu J."/>
            <person name="Wang J."/>
            <person name="Lin W."/>
            <person name="Li S."/>
            <person name="Li H."/>
            <person name="Zhou J."/>
            <person name="Ni P."/>
            <person name="Dong W."/>
            <person name="Hu S."/>
            <person name="Zeng C."/>
            <person name="Zhang J."/>
            <person name="Zhang Y."/>
            <person name="Li R."/>
            <person name="Xu Z."/>
            <person name="Li S."/>
            <person name="Li X."/>
            <person name="Zheng H."/>
            <person name="Cong L."/>
            <person name="Lin L."/>
            <person name="Yin J."/>
            <person name="Geng J."/>
            <person name="Li G."/>
            <person name="Shi J."/>
            <person name="Liu J."/>
            <person name="Lv H."/>
            <person name="Li J."/>
            <person name="Wang J."/>
            <person name="Deng Y."/>
            <person name="Ran L."/>
            <person name="Shi X."/>
            <person name="Wang X."/>
            <person name="Wu Q."/>
            <person name="Li C."/>
            <person name="Ren X."/>
            <person name="Wang J."/>
            <person name="Wang X."/>
            <person name="Li D."/>
            <person name="Liu D."/>
            <person name="Zhang X."/>
            <person name="Ji Z."/>
            <person name="Zhao W."/>
            <person name="Sun Y."/>
            <person name="Zhang Z."/>
            <person name="Bao J."/>
            <person name="Han Y."/>
            <person name="Dong L."/>
            <person name="Ji J."/>
            <person name="Chen P."/>
            <person name="Wu S."/>
            <person name="Liu J."/>
            <person name="Xiao Y."/>
            <person name="Bu D."/>
            <person name="Tan J."/>
            <person name="Yang L."/>
            <person name="Ye C."/>
            <person name="Zhang J."/>
            <person name="Xu J."/>
            <person name="Zhou Y."/>
            <person name="Yu Y."/>
            <person name="Zhang B."/>
            <person name="Zhuang S."/>
            <person name="Wei H."/>
            <person name="Liu B."/>
            <person name="Lei M."/>
            <person name="Yu H."/>
            <person name="Li Y."/>
            <person name="Xu H."/>
            <person name="Wei S."/>
            <person name="He X."/>
            <person name="Fang L."/>
            <person name="Zhang Z."/>
            <person name="Zhang Y."/>
            <person name="Huang X."/>
            <person name="Su Z."/>
            <person name="Tong W."/>
            <person name="Li J."/>
            <person name="Tong Z."/>
            <person name="Li S."/>
            <person name="Ye J."/>
            <person name="Wang L."/>
            <person name="Fang L."/>
            <person name="Lei T."/>
            <person name="Chen C.-S."/>
            <person name="Chen H.-C."/>
            <person name="Xu Z."/>
            <person name="Li H."/>
            <person name="Huang H."/>
            <person name="Zhang F."/>
            <person name="Xu H."/>
            <person name="Li N."/>
            <person name="Zhao C."/>
            <person name="Li S."/>
            <person name="Dong L."/>
            <person name="Huang Y."/>
            <person name="Li L."/>
            <person name="Xi Y."/>
            <person name="Qi Q."/>
            <person name="Li W."/>
            <person name="Zhang B."/>
            <person name="Hu W."/>
            <person name="Zhang Y."/>
            <person name="Tian X."/>
            <person name="Jiao Y."/>
            <person name="Liang X."/>
            <person name="Jin J."/>
            <person name="Gao L."/>
            <person name="Zheng W."/>
            <person name="Hao B."/>
            <person name="Liu S.-M."/>
            <person name="Wang W."/>
            <person name="Yuan L."/>
            <person name="Cao M."/>
            <person name="McDermott J."/>
            <person name="Samudrala R."/>
            <person name="Wang J."/>
            <person name="Wong G.K.-S."/>
            <person name="Yang H."/>
        </authorList>
    </citation>
    <scope>NUCLEOTIDE SEQUENCE [LARGE SCALE GENOMIC DNA]</scope>
    <source>
        <strain>cv. 93-11</strain>
    </source>
</reference>
<name>INV2_ORYSI</name>
<sequence>MGVLGSRVAWAWLVQLLLLQQLAGASHVVYDDLELQAAAATADGVPPSIVDSELRTGYHFQPPKNWINDPNAPMYYKGWYHLFYQYNPKGAVWGNIVWAHSVSRDLINWVALKPAIEPSIRADKYGCWSGSATMMADGTPVIMYTGVNRPDVNYQVQNVALPRNGSDPLLREWVKPGHNPVIVPEGGINATQFRDPTTAWRGADGHWRLLVGSLAGQSRGVAYVYRSRDFRRWTRAAQPLHSAPTGMWECPDFYPVTADGRREGVDTSSAVVDAAASARVKYVLKNSLDLRRYDYYTVGTYDRKAERYVPDDPAGDEHHIRYDYGNFYASKTFYDPAKRRRILWGWANESDTAADDVAKGWAGIQAIPRKVWLDPSGKQLLQWPIEEVERLRGKWPVILKDRVVKPGEHVEVTGLQTAQADVEVSFEVGSLEAAERLDPAMAYDAQRLCSARGADARGGVGPFGLWVLASAGLEEKTAVFFRVFRPAARGGGAGKPVVLMCTDPTKSSRNPNMYQPTFAGFVDTDITNGKISLRSLIDRSVVESFGAGGKACILSRVYPSLAIGKNARLYVFNNGKAEIKVSQLTAWEMKKPVMMNGA</sequence>
<dbReference type="EC" id="3.2.1.26"/>
<dbReference type="EMBL" id="AY340072">
    <property type="protein sequence ID" value="AAQ24868.1"/>
    <property type="molecule type" value="mRNA"/>
</dbReference>
<dbReference type="EMBL" id="CR855194">
    <property type="protein sequence ID" value="CAH67363.1"/>
    <property type="status" value="ALT_SEQ"/>
    <property type="molecule type" value="Genomic_DNA"/>
</dbReference>
<dbReference type="EMBL" id="CM000129">
    <property type="status" value="NOT_ANNOTATED_CDS"/>
    <property type="molecule type" value="Genomic_DNA"/>
</dbReference>
<dbReference type="SMR" id="Q01IS7"/>
<dbReference type="STRING" id="39946.Q01IS7"/>
<dbReference type="CAZy" id="GH32">
    <property type="family name" value="Glycoside Hydrolase Family 32"/>
</dbReference>
<dbReference type="GlyCosmos" id="Q01IS7">
    <property type="glycosylation" value="3 sites, No reported glycans"/>
</dbReference>
<dbReference type="EnsemblPlants" id="BGIOSGA016364-TA">
    <property type="protein sequence ID" value="BGIOSGA016364-PA"/>
    <property type="gene ID" value="BGIOSGA016364"/>
</dbReference>
<dbReference type="Gramene" id="BGIOSGA016364-TA">
    <property type="protein sequence ID" value="BGIOSGA016364-PA"/>
    <property type="gene ID" value="BGIOSGA016364"/>
</dbReference>
<dbReference type="HOGENOM" id="CLU_001528_6_0_1"/>
<dbReference type="OMA" id="IPREMYV"/>
<dbReference type="BRENDA" id="3.2.1.26">
    <property type="organism ID" value="4460"/>
</dbReference>
<dbReference type="Proteomes" id="UP000007015">
    <property type="component" value="Chromosome 4"/>
</dbReference>
<dbReference type="ExpressionAtlas" id="Q01IS7">
    <property type="expression patterns" value="differential"/>
</dbReference>
<dbReference type="GO" id="GO:0048046">
    <property type="term" value="C:apoplast"/>
    <property type="evidence" value="ECO:0007669"/>
    <property type="project" value="UniProtKB-SubCell"/>
</dbReference>
<dbReference type="GO" id="GO:0004564">
    <property type="term" value="F:beta-fructofuranosidase activity"/>
    <property type="evidence" value="ECO:0007669"/>
    <property type="project" value="UniProtKB-EC"/>
</dbReference>
<dbReference type="GO" id="GO:0005975">
    <property type="term" value="P:carbohydrate metabolic process"/>
    <property type="evidence" value="ECO:0007669"/>
    <property type="project" value="InterPro"/>
</dbReference>
<dbReference type="CDD" id="cd18624">
    <property type="entry name" value="GH32_Fruct1-like"/>
    <property type="match status" value="1"/>
</dbReference>
<dbReference type="FunFam" id="2.115.10.20:FF:000001">
    <property type="entry name" value="Beta-fructofuranosidase, insoluble isoenzyme CWINV1"/>
    <property type="match status" value="1"/>
</dbReference>
<dbReference type="FunFam" id="2.60.120.560:FF:000002">
    <property type="entry name" value="Beta-fructofuranosidase, insoluble isoenzyme CWINV1"/>
    <property type="match status" value="1"/>
</dbReference>
<dbReference type="Gene3D" id="2.60.120.560">
    <property type="entry name" value="Exo-inulinase, domain 1"/>
    <property type="match status" value="1"/>
</dbReference>
<dbReference type="Gene3D" id="2.115.10.20">
    <property type="entry name" value="Glycosyl hydrolase domain, family 43"/>
    <property type="match status" value="1"/>
</dbReference>
<dbReference type="InterPro" id="IPR013320">
    <property type="entry name" value="ConA-like_dom_sf"/>
</dbReference>
<dbReference type="InterPro" id="IPR050551">
    <property type="entry name" value="Fructan_Metab_Enzymes"/>
</dbReference>
<dbReference type="InterPro" id="IPR001362">
    <property type="entry name" value="Glyco_hydro_32"/>
</dbReference>
<dbReference type="InterPro" id="IPR018053">
    <property type="entry name" value="Glyco_hydro_32_AS"/>
</dbReference>
<dbReference type="InterPro" id="IPR013189">
    <property type="entry name" value="Glyco_hydro_32_C"/>
</dbReference>
<dbReference type="InterPro" id="IPR013148">
    <property type="entry name" value="Glyco_hydro_32_N"/>
</dbReference>
<dbReference type="InterPro" id="IPR023296">
    <property type="entry name" value="Glyco_hydro_beta-prop_sf"/>
</dbReference>
<dbReference type="PANTHER" id="PTHR31953">
    <property type="entry name" value="BETA-FRUCTOFURANOSIDASE, INSOLUBLE ISOENZYME CWINV1-RELATED"/>
    <property type="match status" value="1"/>
</dbReference>
<dbReference type="Pfam" id="PF08244">
    <property type="entry name" value="Glyco_hydro_32C"/>
    <property type="match status" value="1"/>
</dbReference>
<dbReference type="Pfam" id="PF00251">
    <property type="entry name" value="Glyco_hydro_32N"/>
    <property type="match status" value="1"/>
</dbReference>
<dbReference type="SMART" id="SM00640">
    <property type="entry name" value="Glyco_32"/>
    <property type="match status" value="1"/>
</dbReference>
<dbReference type="SUPFAM" id="SSF75005">
    <property type="entry name" value="Arabinanase/levansucrase/invertase"/>
    <property type="match status" value="1"/>
</dbReference>
<dbReference type="SUPFAM" id="SSF49899">
    <property type="entry name" value="Concanavalin A-like lectins/glucanases"/>
    <property type="match status" value="1"/>
</dbReference>
<dbReference type="PROSITE" id="PS00609">
    <property type="entry name" value="GLYCOSYL_HYDROL_F32"/>
    <property type="match status" value="1"/>
</dbReference>
<keyword id="KW-0052">Apoplast</keyword>
<keyword id="KW-0134">Cell wall</keyword>
<keyword id="KW-0325">Glycoprotein</keyword>
<keyword id="KW-0326">Glycosidase</keyword>
<keyword id="KW-0378">Hydrolase</keyword>
<keyword id="KW-1185">Reference proteome</keyword>
<keyword id="KW-0964">Secreted</keyword>
<keyword id="KW-0732">Signal</keyword>
<evidence type="ECO:0000250" key="1"/>
<evidence type="ECO:0000255" key="2"/>
<evidence type="ECO:0000255" key="3">
    <source>
        <dbReference type="PROSITE-ProRule" id="PRU10067"/>
    </source>
</evidence>
<evidence type="ECO:0000305" key="4"/>
<protein>
    <recommendedName>
        <fullName>Beta-fructofuranosidase, insoluble isoenzyme 2</fullName>
        <ecNumber>3.2.1.26</ecNumber>
    </recommendedName>
    <alternativeName>
        <fullName>Cell wall beta-fructosidase 2</fullName>
    </alternativeName>
    <alternativeName>
        <fullName>Invertase 2</fullName>
    </alternativeName>
    <alternativeName>
        <fullName>OsCIN2</fullName>
    </alternativeName>
    <alternativeName>
        <fullName>Sucrose hydrolase 2</fullName>
    </alternativeName>
</protein>
<comment type="function">
    <text evidence="1">May play a role in sucrose partitioning during seed development.</text>
</comment>
<comment type="catalytic activity">
    <reaction evidence="3">
        <text>Hydrolysis of terminal non-reducing beta-D-fructofuranoside residues in beta-D-fructofuranosides.</text>
        <dbReference type="EC" id="3.2.1.26"/>
    </reaction>
</comment>
<comment type="subcellular location">
    <subcellularLocation>
        <location evidence="4">Secreted</location>
        <location evidence="4">Extracellular space</location>
        <location evidence="4">Apoplast</location>
    </subcellularLocation>
    <subcellularLocation>
        <location evidence="4">Secreted</location>
        <location evidence="4">Cell wall</location>
    </subcellularLocation>
    <text evidence="4">Associated to the cell wall.</text>
</comment>
<comment type="similarity">
    <text evidence="4">Belongs to the glycosyl hydrolase 32 family.</text>
</comment>
<comment type="sequence caution" evidence="4">
    <conflict type="erroneous gene model prediction">
        <sequence resource="EMBL-CDS" id="CAH67363"/>
    </conflict>
</comment>
<proteinExistence type="evidence at transcript level"/>
<gene>
    <name type="primary">CIN2</name>
    <name type="ORF">OsI_015276</name>
    <name type="ORF">OSIGBa0134P10.9</name>
</gene>
<organism>
    <name type="scientific">Oryza sativa subsp. indica</name>
    <name type="common">Rice</name>
    <dbReference type="NCBI Taxonomy" id="39946"/>
    <lineage>
        <taxon>Eukaryota</taxon>
        <taxon>Viridiplantae</taxon>
        <taxon>Streptophyta</taxon>
        <taxon>Embryophyta</taxon>
        <taxon>Tracheophyta</taxon>
        <taxon>Spermatophyta</taxon>
        <taxon>Magnoliopsida</taxon>
        <taxon>Liliopsida</taxon>
        <taxon>Poales</taxon>
        <taxon>Poaceae</taxon>
        <taxon>BOP clade</taxon>
        <taxon>Oryzoideae</taxon>
        <taxon>Oryzeae</taxon>
        <taxon>Oryzinae</taxon>
        <taxon>Oryza</taxon>
        <taxon>Oryza sativa</taxon>
    </lineage>
</organism>
<accession>Q01IS7</accession>
<accession>A2XT83</accession>
<accession>Q56UD4</accession>
<accession>Q6VGJ3</accession>
<accession>Q7XVJ4</accession>
<feature type="signal peptide" evidence="2">
    <location>
        <begin position="1"/>
        <end position="25"/>
    </location>
</feature>
<feature type="chain" id="PRO_0000303011" description="Beta-fructofuranosidase, insoluble isoenzyme 2">
    <location>
        <begin position="26"/>
        <end position="598"/>
    </location>
</feature>
<feature type="active site" evidence="3">
    <location>
        <position position="69"/>
    </location>
</feature>
<feature type="glycosylation site" description="N-linked (GlcNAc...) asparagine" evidence="2">
    <location>
        <position position="164"/>
    </location>
</feature>
<feature type="glycosylation site" description="N-linked (GlcNAc...) asparagine" evidence="2">
    <location>
        <position position="189"/>
    </location>
</feature>
<feature type="glycosylation site" description="N-linked (GlcNAc...) asparagine" evidence="2">
    <location>
        <position position="348"/>
    </location>
</feature>
<feature type="sequence conflict" description="In Ref. 1; AAQ24868." evidence="4" ref="1">
    <original>A</original>
    <variation>T</variation>
    <location>
        <position position="40"/>
    </location>
</feature>
<feature type="sequence conflict" description="In Ref. 1; AAQ24868." evidence="4" ref="1">
    <original>M</original>
    <variation>V</variation>
    <location>
        <position position="441"/>
    </location>
</feature>
<feature type="sequence conflict" description="In Ref. 1; AAQ24868." evidence="4" ref="1">
    <original>C</original>
    <variation>R</variation>
    <location>
        <position position="501"/>
    </location>
</feature>